<protein>
    <recommendedName>
        <fullName evidence="1">Large ribosomal subunit protein uL11</fullName>
    </recommendedName>
    <alternativeName>
        <fullName evidence="2">50S ribosomal protein L11</fullName>
    </alternativeName>
</protein>
<organism>
    <name type="scientific">Ligilactobacillus salivarius (strain UCC118)</name>
    <name type="common">Lactobacillus salivarius</name>
    <dbReference type="NCBI Taxonomy" id="362948"/>
    <lineage>
        <taxon>Bacteria</taxon>
        <taxon>Bacillati</taxon>
        <taxon>Bacillota</taxon>
        <taxon>Bacilli</taxon>
        <taxon>Lactobacillales</taxon>
        <taxon>Lactobacillaceae</taxon>
        <taxon>Ligilactobacillus</taxon>
    </lineage>
</organism>
<accession>Q1WST2</accession>
<gene>
    <name evidence="1" type="primary">rplK</name>
    <name type="ordered locus">LSL_1240</name>
</gene>
<comment type="function">
    <text evidence="1">Forms part of the ribosomal stalk which helps the ribosome interact with GTP-bound translation factors.</text>
</comment>
<comment type="subunit">
    <text evidence="1">Part of the ribosomal stalk of the 50S ribosomal subunit. Interacts with L10 and the large rRNA to form the base of the stalk. L10 forms an elongated spine to which L12 dimers bind in a sequential fashion forming a multimeric L10(L12)X complex.</text>
</comment>
<comment type="PTM">
    <text evidence="1">One or more lysine residues are methylated.</text>
</comment>
<comment type="similarity">
    <text evidence="1">Belongs to the universal ribosomal protein uL11 family.</text>
</comment>
<feature type="chain" id="PRO_0000258166" description="Large ribosomal subunit protein uL11">
    <location>
        <begin position="1"/>
        <end position="141"/>
    </location>
</feature>
<proteinExistence type="inferred from homology"/>
<name>RL11_LIGS1</name>
<reference key="1">
    <citation type="journal article" date="2006" name="Proc. Natl. Acad. Sci. U.S.A.">
        <title>Multireplicon genome architecture of Lactobacillus salivarius.</title>
        <authorList>
            <person name="Claesson M.J."/>
            <person name="Li Y."/>
            <person name="Leahy S."/>
            <person name="Canchaya C."/>
            <person name="van Pijkeren J.P."/>
            <person name="Cerdeno-Tarraga A.M."/>
            <person name="Parkhill J."/>
            <person name="Flynn S."/>
            <person name="O'Sullivan G.C."/>
            <person name="Collins J.K."/>
            <person name="Higgins D."/>
            <person name="Shanahan F."/>
            <person name="Fitzgerald G.F."/>
            <person name="van Sinderen D."/>
            <person name="O'Toole P.W."/>
        </authorList>
    </citation>
    <scope>NUCLEOTIDE SEQUENCE [LARGE SCALE GENOMIC DNA]</scope>
    <source>
        <strain>UCC118</strain>
    </source>
</reference>
<keyword id="KW-0488">Methylation</keyword>
<keyword id="KW-1185">Reference proteome</keyword>
<keyword id="KW-0687">Ribonucleoprotein</keyword>
<keyword id="KW-0689">Ribosomal protein</keyword>
<keyword id="KW-0694">RNA-binding</keyword>
<keyword id="KW-0699">rRNA-binding</keyword>
<sequence>MAKNVVNVVKLQIPAGKATPAPPVGPALGQAGINIMGFTKEFNARTADQAGMIIPVVISVYEDRSFDFVTKTPPAAVLLKKAAGVEKGSGEPNMKKVATVTKDQVKEIAETKMQDLNAADVEAAMRMIEGTARSMGFVVED</sequence>
<evidence type="ECO:0000255" key="1">
    <source>
        <dbReference type="HAMAP-Rule" id="MF_00736"/>
    </source>
</evidence>
<evidence type="ECO:0000305" key="2"/>
<dbReference type="EMBL" id="CP000233">
    <property type="protein sequence ID" value="ABE00047.1"/>
    <property type="molecule type" value="Genomic_DNA"/>
</dbReference>
<dbReference type="RefSeq" id="WP_003700679.1">
    <property type="nucleotide sequence ID" value="NC_007929.1"/>
</dbReference>
<dbReference type="RefSeq" id="YP_536130.1">
    <property type="nucleotide sequence ID" value="NC_007929.1"/>
</dbReference>
<dbReference type="SMR" id="Q1WST2"/>
<dbReference type="STRING" id="362948.LSL_1240"/>
<dbReference type="GeneID" id="89465969"/>
<dbReference type="KEGG" id="lsl:LSL_1240"/>
<dbReference type="PATRIC" id="fig|362948.14.peg.1314"/>
<dbReference type="HOGENOM" id="CLU_074237_2_1_9"/>
<dbReference type="OrthoDB" id="9802408at2"/>
<dbReference type="Proteomes" id="UP000006559">
    <property type="component" value="Chromosome"/>
</dbReference>
<dbReference type="GO" id="GO:0022625">
    <property type="term" value="C:cytosolic large ribosomal subunit"/>
    <property type="evidence" value="ECO:0007669"/>
    <property type="project" value="TreeGrafter"/>
</dbReference>
<dbReference type="GO" id="GO:0070180">
    <property type="term" value="F:large ribosomal subunit rRNA binding"/>
    <property type="evidence" value="ECO:0007669"/>
    <property type="project" value="UniProtKB-UniRule"/>
</dbReference>
<dbReference type="GO" id="GO:0003735">
    <property type="term" value="F:structural constituent of ribosome"/>
    <property type="evidence" value="ECO:0007669"/>
    <property type="project" value="InterPro"/>
</dbReference>
<dbReference type="GO" id="GO:0006412">
    <property type="term" value="P:translation"/>
    <property type="evidence" value="ECO:0007669"/>
    <property type="project" value="UniProtKB-UniRule"/>
</dbReference>
<dbReference type="CDD" id="cd00349">
    <property type="entry name" value="Ribosomal_L11"/>
    <property type="match status" value="1"/>
</dbReference>
<dbReference type="FunFam" id="1.10.10.250:FF:000001">
    <property type="entry name" value="50S ribosomal protein L11"/>
    <property type="match status" value="1"/>
</dbReference>
<dbReference type="FunFam" id="3.30.1550.10:FF:000001">
    <property type="entry name" value="50S ribosomal protein L11"/>
    <property type="match status" value="1"/>
</dbReference>
<dbReference type="Gene3D" id="1.10.10.250">
    <property type="entry name" value="Ribosomal protein L11, C-terminal domain"/>
    <property type="match status" value="1"/>
</dbReference>
<dbReference type="Gene3D" id="3.30.1550.10">
    <property type="entry name" value="Ribosomal protein L11/L12, N-terminal domain"/>
    <property type="match status" value="1"/>
</dbReference>
<dbReference type="HAMAP" id="MF_00736">
    <property type="entry name" value="Ribosomal_uL11"/>
    <property type="match status" value="1"/>
</dbReference>
<dbReference type="InterPro" id="IPR000911">
    <property type="entry name" value="Ribosomal_uL11"/>
</dbReference>
<dbReference type="InterPro" id="IPR006519">
    <property type="entry name" value="Ribosomal_uL11_bac-typ"/>
</dbReference>
<dbReference type="InterPro" id="IPR020783">
    <property type="entry name" value="Ribosomal_uL11_C"/>
</dbReference>
<dbReference type="InterPro" id="IPR036769">
    <property type="entry name" value="Ribosomal_uL11_C_sf"/>
</dbReference>
<dbReference type="InterPro" id="IPR020785">
    <property type="entry name" value="Ribosomal_uL11_CS"/>
</dbReference>
<dbReference type="InterPro" id="IPR020784">
    <property type="entry name" value="Ribosomal_uL11_N"/>
</dbReference>
<dbReference type="InterPro" id="IPR036796">
    <property type="entry name" value="Ribosomal_uL11_N_sf"/>
</dbReference>
<dbReference type="NCBIfam" id="TIGR01632">
    <property type="entry name" value="L11_bact"/>
    <property type="match status" value="1"/>
</dbReference>
<dbReference type="PANTHER" id="PTHR11661">
    <property type="entry name" value="60S RIBOSOMAL PROTEIN L12"/>
    <property type="match status" value="1"/>
</dbReference>
<dbReference type="PANTHER" id="PTHR11661:SF1">
    <property type="entry name" value="LARGE RIBOSOMAL SUBUNIT PROTEIN UL11M"/>
    <property type="match status" value="1"/>
</dbReference>
<dbReference type="Pfam" id="PF00298">
    <property type="entry name" value="Ribosomal_L11"/>
    <property type="match status" value="1"/>
</dbReference>
<dbReference type="Pfam" id="PF03946">
    <property type="entry name" value="Ribosomal_L11_N"/>
    <property type="match status" value="1"/>
</dbReference>
<dbReference type="SMART" id="SM00649">
    <property type="entry name" value="RL11"/>
    <property type="match status" value="1"/>
</dbReference>
<dbReference type="SUPFAM" id="SSF54747">
    <property type="entry name" value="Ribosomal L11/L12e N-terminal domain"/>
    <property type="match status" value="1"/>
</dbReference>
<dbReference type="SUPFAM" id="SSF46906">
    <property type="entry name" value="Ribosomal protein L11, C-terminal domain"/>
    <property type="match status" value="1"/>
</dbReference>
<dbReference type="PROSITE" id="PS00359">
    <property type="entry name" value="RIBOSOMAL_L11"/>
    <property type="match status" value="1"/>
</dbReference>